<feature type="peptide" id="PRO_0000402814" description="Tachykinin-like peptide-IV" evidence="2">
    <location>
        <begin position="1"/>
        <end position="9"/>
    </location>
</feature>
<feature type="modified residue" description="Pyrrolidone carboxylic acid" evidence="2">
    <location>
        <position position="1"/>
    </location>
</feature>
<organism>
    <name type="scientific">Phoneutria nigriventer</name>
    <name type="common">Brazilian armed spider</name>
    <name type="synonym">Ctenus nigriventer</name>
    <dbReference type="NCBI Taxonomy" id="6918"/>
    <lineage>
        <taxon>Eukaryota</taxon>
        <taxon>Metazoa</taxon>
        <taxon>Ecdysozoa</taxon>
        <taxon>Arthropoda</taxon>
        <taxon>Chelicerata</taxon>
        <taxon>Arachnida</taxon>
        <taxon>Araneae</taxon>
        <taxon>Araneomorphae</taxon>
        <taxon>Entelegynae</taxon>
        <taxon>Lycosoidea</taxon>
        <taxon>Ctenidae</taxon>
        <taxon>Phoneutria</taxon>
    </lineage>
</organism>
<sequence>QKKDKKDKF</sequence>
<protein>
    <recommendedName>
        <fullName evidence="5">Tachykinin-like peptide-IV</fullName>
    </recommendedName>
    <alternativeName>
        <fullName evidence="3">P.nigriventer tachykinin peptides IV</fullName>
        <shortName evidence="3">PnTkP-IV</shortName>
    </alternativeName>
    <alternativeName>
        <fullName evidence="4">U29-ctenitoxin-Pn1d</fullName>
        <shortName evidence="4">U29-CNTX-Pn1d</shortName>
    </alternativeName>
</protein>
<proteinExistence type="evidence at protein level"/>
<keyword id="KW-0903">Direct protein sequencing</keyword>
<keyword id="KW-0873">Pyrrolidone carboxylic acid</keyword>
<keyword id="KW-0964">Secreted</keyword>
<comment type="subcellular location">
    <subcellularLocation>
        <location evidence="2">Secreted</location>
    </subcellularLocation>
</comment>
<comment type="tissue specificity">
    <text evidence="2">Expressed by the venom gland.</text>
</comment>
<comment type="mass spectrometry"/>
<comment type="similarity">
    <text evidence="1">Belongs to the tachykinin family.</text>
</comment>
<dbReference type="GO" id="GO:0005576">
    <property type="term" value="C:extracellular region"/>
    <property type="evidence" value="ECO:0000314"/>
    <property type="project" value="UniProtKB"/>
</dbReference>
<reference evidence="4" key="1">
    <citation type="journal article" date="2005" name="Rapid Commun. Mass Spectrom.">
        <title>Electrospray ionization quadrupole time-of-flight and matrix-assisted laser desorption/ionization tandem time-of-flight mass spectrometric analyses to solve micro-heterogeneity in post-translationally modified peptides from Phoneutria nigriventer (Aranea, Ctenidae) venom.</title>
        <authorList>
            <person name="Pimenta A.M.C."/>
            <person name="Rates B."/>
            <person name="Bloch C. Jr."/>
            <person name="Gomes P.C."/>
            <person name="Santoro M.M."/>
            <person name="de Lima M.E."/>
            <person name="Richardson M."/>
            <person name="Cordeiro M.N."/>
        </authorList>
    </citation>
    <scope>PROTEIN SEQUENCE</scope>
    <scope>SUBCELLULAR LOCATION</scope>
    <scope>TISSUE SPECIFICITY</scope>
    <scope>MASS SPECTROMETRY</scope>
    <scope>PYROGLUTAMATE FORMATION AT GLN-1</scope>
    <source>
        <tissue evidence="2">Venom</tissue>
    </source>
</reference>
<evidence type="ECO:0000255" key="1"/>
<evidence type="ECO:0000269" key="2">
    <source>
    </source>
</evidence>
<evidence type="ECO:0000303" key="3">
    <source>
    </source>
</evidence>
<evidence type="ECO:0000305" key="4"/>
<evidence type="ECO:0000305" key="5">
    <source>
    </source>
</evidence>
<accession>P86301</accession>
<name>TLP4_PHONI</name>